<comment type="similarity">
    <text evidence="1">Belongs to the eukaryotic ribosomal protein eS4 family.</text>
</comment>
<gene>
    <name type="primary">rps4e</name>
    <name type="ordered locus">AF_1913</name>
</gene>
<reference key="1">
    <citation type="journal article" date="1997" name="Nature">
        <title>The complete genome sequence of the hyperthermophilic, sulphate-reducing archaeon Archaeoglobus fulgidus.</title>
        <authorList>
            <person name="Klenk H.-P."/>
            <person name="Clayton R.A."/>
            <person name="Tomb J.-F."/>
            <person name="White O."/>
            <person name="Nelson K.E."/>
            <person name="Ketchum K.A."/>
            <person name="Dodson R.J."/>
            <person name="Gwinn M.L."/>
            <person name="Hickey E.K."/>
            <person name="Peterson J.D."/>
            <person name="Richardson D.L."/>
            <person name="Kerlavage A.R."/>
            <person name="Graham D.E."/>
            <person name="Kyrpides N.C."/>
            <person name="Fleischmann R.D."/>
            <person name="Quackenbush J."/>
            <person name="Lee N.H."/>
            <person name="Sutton G.G."/>
            <person name="Gill S.R."/>
            <person name="Kirkness E.F."/>
            <person name="Dougherty B.A."/>
            <person name="McKenney K."/>
            <person name="Adams M.D."/>
            <person name="Loftus B.J."/>
            <person name="Peterson S.N."/>
            <person name="Reich C.I."/>
            <person name="McNeil L.K."/>
            <person name="Badger J.H."/>
            <person name="Glodek A."/>
            <person name="Zhou L."/>
            <person name="Overbeek R."/>
            <person name="Gocayne J.D."/>
            <person name="Weidman J.F."/>
            <person name="McDonald L.A."/>
            <person name="Utterback T.R."/>
            <person name="Cotton M.D."/>
            <person name="Spriggs T."/>
            <person name="Artiach P."/>
            <person name="Kaine B.P."/>
            <person name="Sykes S.M."/>
            <person name="Sadow P.W."/>
            <person name="D'Andrea K.P."/>
            <person name="Bowman C."/>
            <person name="Fujii C."/>
            <person name="Garland S.A."/>
            <person name="Mason T.M."/>
            <person name="Olsen G.J."/>
            <person name="Fraser C.M."/>
            <person name="Smith H.O."/>
            <person name="Woese C.R."/>
            <person name="Venter J.C."/>
        </authorList>
    </citation>
    <scope>NUCLEOTIDE SEQUENCE [LARGE SCALE GENOMIC DNA]</scope>
    <source>
        <strain>ATCC 49558 / DSM 4304 / JCM 9628 / NBRC 100126 / VC-16</strain>
    </source>
</reference>
<evidence type="ECO:0000305" key="1"/>
<feature type="chain" id="PRO_0000130845" description="Small ribosomal subunit protein eS4">
    <location>
        <begin position="1"/>
        <end position="235"/>
    </location>
</feature>
<feature type="domain" description="S4 RNA-binding">
    <location>
        <begin position="38"/>
        <end position="101"/>
    </location>
</feature>
<proteinExistence type="inferred from homology"/>
<keyword id="KW-1185">Reference proteome</keyword>
<keyword id="KW-0687">Ribonucleoprotein</keyword>
<keyword id="KW-0689">Ribosomal protein</keyword>
<keyword id="KW-0694">RNA-binding</keyword>
<keyword id="KW-0699">rRNA-binding</keyword>
<protein>
    <recommendedName>
        <fullName evidence="1">Small ribosomal subunit protein eS4</fullName>
    </recommendedName>
    <alternativeName>
        <fullName>30S ribosomal protein S4e</fullName>
    </alternativeName>
</protein>
<sequence length="235" mass="26439">MIELHQKRLSAPKTYKIPRKVSKWVVKPSPGPHNKEAIPLLVLVRDFLELADTGREARRIISAGEILVDGVVRKDYKFPVGLFDVVTIPKLEKSYRILFDEKGRYIPKEVEDADLKLYKITNKTLVRGGKVQLNLFDGTNILGSNDYKTKDSILLRIPEKEVVDHLKFEEGALVMITGGTHAGEIGRIKSYKIVRSSAPNLVTVEGEERDITTIEDYVFVVGKKDSDKPVIDLGV</sequence>
<name>RS4E_ARCFU</name>
<organism>
    <name type="scientific">Archaeoglobus fulgidus (strain ATCC 49558 / DSM 4304 / JCM 9628 / NBRC 100126 / VC-16)</name>
    <dbReference type="NCBI Taxonomy" id="224325"/>
    <lineage>
        <taxon>Archaea</taxon>
        <taxon>Methanobacteriati</taxon>
        <taxon>Methanobacteriota</taxon>
        <taxon>Archaeoglobi</taxon>
        <taxon>Archaeoglobales</taxon>
        <taxon>Archaeoglobaceae</taxon>
        <taxon>Archaeoglobus</taxon>
    </lineage>
</organism>
<accession>O28366</accession>
<dbReference type="EMBL" id="AE000782">
    <property type="protein sequence ID" value="AAB89340.1"/>
    <property type="molecule type" value="Genomic_DNA"/>
</dbReference>
<dbReference type="PIR" id="H69488">
    <property type="entry name" value="H69488"/>
</dbReference>
<dbReference type="SMR" id="O28366"/>
<dbReference type="STRING" id="224325.AF_1913"/>
<dbReference type="PaxDb" id="224325-AF_1913"/>
<dbReference type="EnsemblBacteria" id="AAB89340">
    <property type="protein sequence ID" value="AAB89340"/>
    <property type="gene ID" value="AF_1913"/>
</dbReference>
<dbReference type="KEGG" id="afu:AF_1913"/>
<dbReference type="eggNOG" id="arCOG04093">
    <property type="taxonomic scope" value="Archaea"/>
</dbReference>
<dbReference type="HOGENOM" id="CLU_060400_0_0_2"/>
<dbReference type="PhylomeDB" id="O28366"/>
<dbReference type="Proteomes" id="UP000002199">
    <property type="component" value="Chromosome"/>
</dbReference>
<dbReference type="GO" id="GO:0022627">
    <property type="term" value="C:cytosolic small ribosomal subunit"/>
    <property type="evidence" value="ECO:0007669"/>
    <property type="project" value="TreeGrafter"/>
</dbReference>
<dbReference type="GO" id="GO:0019843">
    <property type="term" value="F:rRNA binding"/>
    <property type="evidence" value="ECO:0007669"/>
    <property type="project" value="UniProtKB-KW"/>
</dbReference>
<dbReference type="GO" id="GO:0003735">
    <property type="term" value="F:structural constituent of ribosome"/>
    <property type="evidence" value="ECO:0007669"/>
    <property type="project" value="InterPro"/>
</dbReference>
<dbReference type="GO" id="GO:0006412">
    <property type="term" value="P:translation"/>
    <property type="evidence" value="ECO:0007669"/>
    <property type="project" value="UniProtKB-UniRule"/>
</dbReference>
<dbReference type="CDD" id="cd06087">
    <property type="entry name" value="KOW_RPS4"/>
    <property type="match status" value="1"/>
</dbReference>
<dbReference type="CDD" id="cd00165">
    <property type="entry name" value="S4"/>
    <property type="match status" value="1"/>
</dbReference>
<dbReference type="FunFam" id="3.10.290.10:FF:000002">
    <property type="entry name" value="40S ribosomal protein S4"/>
    <property type="match status" value="1"/>
</dbReference>
<dbReference type="Gene3D" id="2.30.30.30">
    <property type="match status" value="1"/>
</dbReference>
<dbReference type="Gene3D" id="2.40.50.740">
    <property type="match status" value="1"/>
</dbReference>
<dbReference type="Gene3D" id="3.10.290.10">
    <property type="entry name" value="RNA-binding S4 domain"/>
    <property type="match status" value="1"/>
</dbReference>
<dbReference type="HAMAP" id="MF_00485">
    <property type="entry name" value="Ribosomal_eS4"/>
    <property type="match status" value="1"/>
</dbReference>
<dbReference type="InterPro" id="IPR005824">
    <property type="entry name" value="KOW"/>
</dbReference>
<dbReference type="InterPro" id="IPR014722">
    <property type="entry name" value="Rib_uL2_dom2"/>
</dbReference>
<dbReference type="InterPro" id="IPR000876">
    <property type="entry name" value="Ribosomal_eS4"/>
</dbReference>
<dbReference type="InterPro" id="IPR013845">
    <property type="entry name" value="Ribosomal_eS4_central_region"/>
</dbReference>
<dbReference type="InterPro" id="IPR038237">
    <property type="entry name" value="Ribosomal_eS4_central_sf"/>
</dbReference>
<dbReference type="InterPro" id="IPR041982">
    <property type="entry name" value="Ribosomal_eS4_KOW"/>
</dbReference>
<dbReference type="InterPro" id="IPR013843">
    <property type="entry name" value="Ribosomal_eS4_N"/>
</dbReference>
<dbReference type="InterPro" id="IPR018199">
    <property type="entry name" value="Ribosomal_eS4_N_CS"/>
</dbReference>
<dbReference type="InterPro" id="IPR002942">
    <property type="entry name" value="S4_RNA-bd"/>
</dbReference>
<dbReference type="InterPro" id="IPR036986">
    <property type="entry name" value="S4_RNA-bd_sf"/>
</dbReference>
<dbReference type="NCBIfam" id="NF003312">
    <property type="entry name" value="PRK04313.1"/>
    <property type="match status" value="1"/>
</dbReference>
<dbReference type="PANTHER" id="PTHR11581">
    <property type="entry name" value="30S/40S RIBOSOMAL PROTEIN S4"/>
    <property type="match status" value="1"/>
</dbReference>
<dbReference type="PANTHER" id="PTHR11581:SF0">
    <property type="entry name" value="SMALL RIBOSOMAL SUBUNIT PROTEIN ES4"/>
    <property type="match status" value="1"/>
</dbReference>
<dbReference type="Pfam" id="PF00900">
    <property type="entry name" value="Ribosomal_S4e"/>
    <property type="match status" value="1"/>
</dbReference>
<dbReference type="Pfam" id="PF08071">
    <property type="entry name" value="RS4NT"/>
    <property type="match status" value="1"/>
</dbReference>
<dbReference type="Pfam" id="PF01479">
    <property type="entry name" value="S4"/>
    <property type="match status" value="1"/>
</dbReference>
<dbReference type="PIRSF" id="PIRSF002116">
    <property type="entry name" value="Ribosomal_S4"/>
    <property type="match status" value="1"/>
</dbReference>
<dbReference type="SMART" id="SM00739">
    <property type="entry name" value="KOW"/>
    <property type="match status" value="1"/>
</dbReference>
<dbReference type="SMART" id="SM00363">
    <property type="entry name" value="S4"/>
    <property type="match status" value="1"/>
</dbReference>
<dbReference type="SUPFAM" id="SSF55174">
    <property type="entry name" value="Alpha-L RNA-binding motif"/>
    <property type="match status" value="1"/>
</dbReference>
<dbReference type="PROSITE" id="PS00528">
    <property type="entry name" value="RIBOSOMAL_S4E"/>
    <property type="match status" value="1"/>
</dbReference>
<dbReference type="PROSITE" id="PS50889">
    <property type="entry name" value="S4"/>
    <property type="match status" value="1"/>
</dbReference>